<evidence type="ECO:0000255" key="1">
    <source>
        <dbReference type="HAMAP-Rule" id="MF_01592"/>
    </source>
</evidence>
<reference key="1">
    <citation type="journal article" date="2006" name="J. Bacteriol.">
        <title>Complete genome sequence of Yersinia pestis strains Antiqua and Nepal516: evidence of gene reduction in an emerging pathogen.</title>
        <authorList>
            <person name="Chain P.S.G."/>
            <person name="Hu P."/>
            <person name="Malfatti S.A."/>
            <person name="Radnedge L."/>
            <person name="Larimer F."/>
            <person name="Vergez L.M."/>
            <person name="Worsham P."/>
            <person name="Chu M.C."/>
            <person name="Andersen G.L."/>
        </authorList>
    </citation>
    <scope>NUCLEOTIDE SEQUENCE [LARGE SCALE GENOMIC DNA]</scope>
    <source>
        <strain>Nepal516</strain>
    </source>
</reference>
<reference key="2">
    <citation type="submission" date="2009-04" db="EMBL/GenBank/DDBJ databases">
        <title>Yersinia pestis Nepal516A whole genome shotgun sequencing project.</title>
        <authorList>
            <person name="Plunkett G. III"/>
            <person name="Anderson B.D."/>
            <person name="Baumler D.J."/>
            <person name="Burland V."/>
            <person name="Cabot E.L."/>
            <person name="Glasner J.D."/>
            <person name="Mau B."/>
            <person name="Neeno-Eckwall E."/>
            <person name="Perna N.T."/>
            <person name="Munk A.C."/>
            <person name="Tapia R."/>
            <person name="Green L.D."/>
            <person name="Rogers Y.C."/>
            <person name="Detter J.C."/>
            <person name="Bruce D.C."/>
            <person name="Brettin T.S."/>
        </authorList>
    </citation>
    <scope>NUCLEOTIDE SEQUENCE [LARGE SCALE GENOMIC DNA]</scope>
    <source>
        <strain>Nepal516</strain>
    </source>
</reference>
<gene>
    <name evidence="1" type="primary">nudL</name>
    <name type="ordered locus">YPN_2351</name>
    <name type="ORF">YP516_2649</name>
</gene>
<name>NUDL_YERPN</name>
<feature type="chain" id="PRO_0000315591" description="Uncharacterized Nudix hydrolase NudL">
    <location>
        <begin position="1"/>
        <end position="199"/>
    </location>
</feature>
<feature type="domain" description="Nudix hydrolase" evidence="1">
    <location>
        <begin position="38"/>
        <end position="169"/>
    </location>
</feature>
<feature type="short sequence motif" description="Nudix box">
    <location>
        <begin position="76"/>
        <end position="98"/>
    </location>
</feature>
<feature type="binding site" evidence="1">
    <location>
        <position position="92"/>
    </location>
    <ligand>
        <name>Mg(2+)</name>
        <dbReference type="ChEBI" id="CHEBI:18420"/>
    </ligand>
</feature>
<feature type="binding site" evidence="1">
    <location>
        <position position="96"/>
    </location>
    <ligand>
        <name>Mg(2+)</name>
        <dbReference type="ChEBI" id="CHEBI:18420"/>
    </ligand>
</feature>
<organism>
    <name type="scientific">Yersinia pestis bv. Antiqua (strain Nepal516)</name>
    <dbReference type="NCBI Taxonomy" id="377628"/>
    <lineage>
        <taxon>Bacteria</taxon>
        <taxon>Pseudomonadati</taxon>
        <taxon>Pseudomonadota</taxon>
        <taxon>Gammaproteobacteria</taxon>
        <taxon>Enterobacterales</taxon>
        <taxon>Yersiniaceae</taxon>
        <taxon>Yersinia</taxon>
    </lineage>
</organism>
<accession>Q1CH51</accession>
<accession>C4GUQ4</accession>
<protein>
    <recommendedName>
        <fullName evidence="1">Uncharacterized Nudix hydrolase NudL</fullName>
        <ecNumber evidence="1">3.6.1.-</ecNumber>
    </recommendedName>
</protein>
<sequence>MSELITGQYLSEFINRFQLQLPQPDNVLTHSHYFSATNRRAAVLIPIICRPEPTLLLTRRADHLRKHAGQVAFPGGKADPDDQSLISTALREAEEEVAIPASVVHVLGKLAPLNSSSGYHVTPIVGLVPANIPFYGNDEEVAGLFEIPLHEALSLSRYHSLDIHREGINHRVYLSWYENQFIWGLTATIIRHLAQQVSI</sequence>
<dbReference type="EC" id="3.6.1.-" evidence="1"/>
<dbReference type="EMBL" id="CP000305">
    <property type="protein sequence ID" value="ABG18679.1"/>
    <property type="molecule type" value="Genomic_DNA"/>
</dbReference>
<dbReference type="EMBL" id="ACNQ01000013">
    <property type="protein sequence ID" value="EEO76441.1"/>
    <property type="molecule type" value="Genomic_DNA"/>
</dbReference>
<dbReference type="RefSeq" id="WP_002211080.1">
    <property type="nucleotide sequence ID" value="NZ_ACNQ01000013.1"/>
</dbReference>
<dbReference type="SMR" id="Q1CH51"/>
<dbReference type="KEGG" id="ypn:YPN_2351"/>
<dbReference type="HOGENOM" id="CLU_040940_5_2_6"/>
<dbReference type="Proteomes" id="UP000008936">
    <property type="component" value="Chromosome"/>
</dbReference>
<dbReference type="GO" id="GO:0010945">
    <property type="term" value="F:coenzyme A diphosphatase activity"/>
    <property type="evidence" value="ECO:0007669"/>
    <property type="project" value="InterPro"/>
</dbReference>
<dbReference type="GO" id="GO:0000287">
    <property type="term" value="F:magnesium ion binding"/>
    <property type="evidence" value="ECO:0007669"/>
    <property type="project" value="UniProtKB-UniRule"/>
</dbReference>
<dbReference type="GO" id="GO:0030145">
    <property type="term" value="F:manganese ion binding"/>
    <property type="evidence" value="ECO:0007669"/>
    <property type="project" value="UniProtKB-UniRule"/>
</dbReference>
<dbReference type="GO" id="GO:0009132">
    <property type="term" value="P:nucleoside diphosphate metabolic process"/>
    <property type="evidence" value="ECO:0007669"/>
    <property type="project" value="InterPro"/>
</dbReference>
<dbReference type="CDD" id="cd03426">
    <property type="entry name" value="NUDIX_CoAse_Nudt7"/>
    <property type="match status" value="1"/>
</dbReference>
<dbReference type="Gene3D" id="3.90.79.10">
    <property type="entry name" value="Nucleoside Triphosphate Pyrophosphohydrolase"/>
    <property type="match status" value="1"/>
</dbReference>
<dbReference type="HAMAP" id="MF_01592">
    <property type="entry name" value="Nudix_NudL"/>
    <property type="match status" value="1"/>
</dbReference>
<dbReference type="InterPro" id="IPR045121">
    <property type="entry name" value="CoAse"/>
</dbReference>
<dbReference type="InterPro" id="IPR015797">
    <property type="entry name" value="NUDIX_hydrolase-like_dom_sf"/>
</dbReference>
<dbReference type="InterPro" id="IPR000086">
    <property type="entry name" value="NUDIX_hydrolase_dom"/>
</dbReference>
<dbReference type="InterPro" id="IPR000059">
    <property type="entry name" value="NUDIX_hydrolase_NudL_CS"/>
</dbReference>
<dbReference type="InterPro" id="IPR023735">
    <property type="entry name" value="Nudix_NudL"/>
</dbReference>
<dbReference type="NCBIfam" id="NF007980">
    <property type="entry name" value="PRK10707.1"/>
    <property type="match status" value="1"/>
</dbReference>
<dbReference type="PANTHER" id="PTHR12992:SF11">
    <property type="entry name" value="MITOCHONDRIAL COENZYME A DIPHOSPHATASE NUDT8"/>
    <property type="match status" value="1"/>
</dbReference>
<dbReference type="PANTHER" id="PTHR12992">
    <property type="entry name" value="NUDIX HYDROLASE"/>
    <property type="match status" value="1"/>
</dbReference>
<dbReference type="Pfam" id="PF00293">
    <property type="entry name" value="NUDIX"/>
    <property type="match status" value="1"/>
</dbReference>
<dbReference type="SUPFAM" id="SSF55811">
    <property type="entry name" value="Nudix"/>
    <property type="match status" value="1"/>
</dbReference>
<dbReference type="PROSITE" id="PS51462">
    <property type="entry name" value="NUDIX"/>
    <property type="match status" value="1"/>
</dbReference>
<dbReference type="PROSITE" id="PS01293">
    <property type="entry name" value="NUDIX_COA"/>
    <property type="match status" value="1"/>
</dbReference>
<comment type="function">
    <text evidence="1">Probably mediates the hydrolysis of some nucleoside diphosphate derivatives.</text>
</comment>
<comment type="cofactor">
    <cofactor evidence="1">
        <name>Mn(2+)</name>
        <dbReference type="ChEBI" id="CHEBI:29035"/>
    </cofactor>
    <cofactor evidence="1">
        <name>Mg(2+)</name>
        <dbReference type="ChEBI" id="CHEBI:18420"/>
    </cofactor>
</comment>
<comment type="similarity">
    <text evidence="1">Belongs to the Nudix hydrolase family. PCD1 subfamily.</text>
</comment>
<keyword id="KW-0378">Hydrolase</keyword>
<keyword id="KW-0460">Magnesium</keyword>
<keyword id="KW-0464">Manganese</keyword>
<keyword id="KW-0479">Metal-binding</keyword>
<proteinExistence type="inferred from homology"/>